<proteinExistence type="inferred from homology"/>
<accession>Q4FTL2</accession>
<feature type="chain" id="PRO_1000071922" description="Nucleoid-associated protein Psyc_0793">
    <location>
        <begin position="1"/>
        <end position="109"/>
    </location>
</feature>
<keyword id="KW-0963">Cytoplasm</keyword>
<keyword id="KW-0238">DNA-binding</keyword>
<keyword id="KW-1185">Reference proteome</keyword>
<evidence type="ECO:0000255" key="1">
    <source>
        <dbReference type="HAMAP-Rule" id="MF_00274"/>
    </source>
</evidence>
<sequence>MNIQALMQQAQTMQKKVEANVENAKKDLANKEVHAEAGSGLVKVTMTGRHVVKRLTIDPSLLEDEPDMIEDLIAAAINDAVRQADELYETTMAGATSGMGLPPGMQGMF</sequence>
<dbReference type="EMBL" id="CP000082">
    <property type="protein sequence ID" value="AAZ18646.1"/>
    <property type="molecule type" value="Genomic_DNA"/>
</dbReference>
<dbReference type="RefSeq" id="WP_011280073.1">
    <property type="nucleotide sequence ID" value="NC_007204.1"/>
</dbReference>
<dbReference type="SMR" id="Q4FTL2"/>
<dbReference type="STRING" id="259536.Psyc_0793"/>
<dbReference type="KEGG" id="par:Psyc_0793"/>
<dbReference type="eggNOG" id="COG0718">
    <property type="taxonomic scope" value="Bacteria"/>
</dbReference>
<dbReference type="HOGENOM" id="CLU_140930_0_0_6"/>
<dbReference type="OrthoDB" id="9808738at2"/>
<dbReference type="Proteomes" id="UP000000546">
    <property type="component" value="Chromosome"/>
</dbReference>
<dbReference type="GO" id="GO:0043590">
    <property type="term" value="C:bacterial nucleoid"/>
    <property type="evidence" value="ECO:0007669"/>
    <property type="project" value="UniProtKB-UniRule"/>
</dbReference>
<dbReference type="GO" id="GO:0005829">
    <property type="term" value="C:cytosol"/>
    <property type="evidence" value="ECO:0007669"/>
    <property type="project" value="TreeGrafter"/>
</dbReference>
<dbReference type="GO" id="GO:0003677">
    <property type="term" value="F:DNA binding"/>
    <property type="evidence" value="ECO:0007669"/>
    <property type="project" value="UniProtKB-UniRule"/>
</dbReference>
<dbReference type="Gene3D" id="3.30.1310.10">
    <property type="entry name" value="Nucleoid-associated protein YbaB-like domain"/>
    <property type="match status" value="1"/>
</dbReference>
<dbReference type="HAMAP" id="MF_00274">
    <property type="entry name" value="DNA_YbaB_EbfC"/>
    <property type="match status" value="1"/>
</dbReference>
<dbReference type="InterPro" id="IPR036894">
    <property type="entry name" value="YbaB-like_sf"/>
</dbReference>
<dbReference type="InterPro" id="IPR004401">
    <property type="entry name" value="YbaB/EbfC"/>
</dbReference>
<dbReference type="NCBIfam" id="TIGR00103">
    <property type="entry name" value="DNA_YbaB_EbfC"/>
    <property type="match status" value="1"/>
</dbReference>
<dbReference type="PANTHER" id="PTHR33449">
    <property type="entry name" value="NUCLEOID-ASSOCIATED PROTEIN YBAB"/>
    <property type="match status" value="1"/>
</dbReference>
<dbReference type="PANTHER" id="PTHR33449:SF1">
    <property type="entry name" value="NUCLEOID-ASSOCIATED PROTEIN YBAB"/>
    <property type="match status" value="1"/>
</dbReference>
<dbReference type="Pfam" id="PF02575">
    <property type="entry name" value="YbaB_DNA_bd"/>
    <property type="match status" value="1"/>
</dbReference>
<dbReference type="PIRSF" id="PIRSF004555">
    <property type="entry name" value="UCP004555"/>
    <property type="match status" value="1"/>
</dbReference>
<dbReference type="SUPFAM" id="SSF82607">
    <property type="entry name" value="YbaB-like"/>
    <property type="match status" value="1"/>
</dbReference>
<name>Y793_PSYA2</name>
<gene>
    <name type="ordered locus">Psyc_0793</name>
</gene>
<reference key="1">
    <citation type="journal article" date="2010" name="Appl. Environ. Microbiol.">
        <title>The genome sequence of Psychrobacter arcticus 273-4, a psychroactive Siberian permafrost bacterium, reveals mechanisms for adaptation to low-temperature growth.</title>
        <authorList>
            <person name="Ayala-del-Rio H.L."/>
            <person name="Chain P.S."/>
            <person name="Grzymski J.J."/>
            <person name="Ponder M.A."/>
            <person name="Ivanova N."/>
            <person name="Bergholz P.W."/>
            <person name="Di Bartolo G."/>
            <person name="Hauser L."/>
            <person name="Land M."/>
            <person name="Bakermans C."/>
            <person name="Rodrigues D."/>
            <person name="Klappenbach J."/>
            <person name="Zarka D."/>
            <person name="Larimer F."/>
            <person name="Richardson P."/>
            <person name="Murray A."/>
            <person name="Thomashow M."/>
            <person name="Tiedje J.M."/>
        </authorList>
    </citation>
    <scope>NUCLEOTIDE SEQUENCE [LARGE SCALE GENOMIC DNA]</scope>
    <source>
        <strain>DSM 17307 / VKM B-2377 / 273-4</strain>
    </source>
</reference>
<organism>
    <name type="scientific">Psychrobacter arcticus (strain DSM 17307 / VKM B-2377 / 273-4)</name>
    <dbReference type="NCBI Taxonomy" id="259536"/>
    <lineage>
        <taxon>Bacteria</taxon>
        <taxon>Pseudomonadati</taxon>
        <taxon>Pseudomonadota</taxon>
        <taxon>Gammaproteobacteria</taxon>
        <taxon>Moraxellales</taxon>
        <taxon>Moraxellaceae</taxon>
        <taxon>Psychrobacter</taxon>
    </lineage>
</organism>
<protein>
    <recommendedName>
        <fullName evidence="1">Nucleoid-associated protein Psyc_0793</fullName>
    </recommendedName>
</protein>
<comment type="function">
    <text evidence="1">Binds to DNA and alters its conformation. May be involved in regulation of gene expression, nucleoid organization and DNA protection.</text>
</comment>
<comment type="subunit">
    <text evidence="1">Homodimer.</text>
</comment>
<comment type="subcellular location">
    <subcellularLocation>
        <location evidence="1">Cytoplasm</location>
        <location evidence="1">Nucleoid</location>
    </subcellularLocation>
</comment>
<comment type="similarity">
    <text evidence="1">Belongs to the YbaB/EbfC family.</text>
</comment>